<protein>
    <recommendedName>
        <fullName>Trypsin-modulating oostatic factor</fullName>
        <shortName>TMOF</shortName>
    </recommendedName>
</protein>
<proteinExistence type="evidence at protein level"/>
<name>TMOF_SARBU</name>
<feature type="peptide" id="PRO_0000044227" description="Trypsin-modulating oostatic factor">
    <location>
        <begin position="1"/>
        <end position="6"/>
    </location>
</feature>
<reference key="1">
    <citation type="journal article" date="1994" name="Regul. Pept.">
        <title>Sequencing and characterization of trypsin modulating oostatic factor (TMOF) from the ovaries of the grey fleshfly, Neobellieria (Sarcophaga) bullata.</title>
        <authorList>
            <person name="Bylemans D."/>
            <person name="Borovsky D."/>
            <person name="Hunt D.F."/>
            <person name="Shabanowitz J."/>
            <person name="Grauwels L."/>
            <person name="de Loof A."/>
        </authorList>
    </citation>
    <scope>PROTEIN SEQUENCE</scope>
    <scope>SYNTHESIS</scope>
    <source>
        <tissue>Ovary</tissue>
    </source>
</reference>
<comment type="function">
    <text>Has an oostatic activity. Inhibits trypsin biosynthesis in the midgut which indirectly reduces the vitellogenin concentration in the hemolymph resulting in inhibition of oocyte development.</text>
</comment>
<comment type="developmental stage">
    <text>Synthesized and released from follicular epithelium after a blood meal.</text>
</comment>
<sequence>NPTNLH</sequence>
<dbReference type="GO" id="GO:0005179">
    <property type="term" value="F:hormone activity"/>
    <property type="evidence" value="ECO:0007669"/>
    <property type="project" value="UniProtKB-KW"/>
</dbReference>
<accession>P41495</accession>
<organism>
    <name type="scientific">Sarcophaga bullata</name>
    <name type="common">Grey flesh fly</name>
    <name type="synonym">Neobellieria bullata</name>
    <dbReference type="NCBI Taxonomy" id="7385"/>
    <lineage>
        <taxon>Eukaryota</taxon>
        <taxon>Metazoa</taxon>
        <taxon>Ecdysozoa</taxon>
        <taxon>Arthropoda</taxon>
        <taxon>Hexapoda</taxon>
        <taxon>Insecta</taxon>
        <taxon>Pterygota</taxon>
        <taxon>Neoptera</taxon>
        <taxon>Endopterygota</taxon>
        <taxon>Diptera</taxon>
        <taxon>Brachycera</taxon>
        <taxon>Muscomorpha</taxon>
        <taxon>Oestroidea</taxon>
        <taxon>Sarcophagidae</taxon>
        <taxon>Sarcophaga</taxon>
        <taxon>Neobellieria</taxon>
    </lineage>
</organism>
<keyword id="KW-0903">Direct protein sequencing</keyword>
<keyword id="KW-0372">Hormone</keyword>